<comment type="function">
    <text evidence="1">NAD-binding protein involved in the addition of a carboxymethylaminomethyl (cmnm) group at the wobble position (U34) of certain tRNAs, forming tRNA-cmnm(5)s(2)U34.</text>
</comment>
<comment type="cofactor">
    <cofactor evidence="1">
        <name>FAD</name>
        <dbReference type="ChEBI" id="CHEBI:57692"/>
    </cofactor>
</comment>
<comment type="subunit">
    <text evidence="1">Homodimer. Heterotetramer of two MnmE and two MnmG subunits.</text>
</comment>
<comment type="subcellular location">
    <subcellularLocation>
        <location evidence="1">Cytoplasm</location>
    </subcellularLocation>
</comment>
<comment type="similarity">
    <text evidence="1">Belongs to the MnmG family.</text>
</comment>
<protein>
    <recommendedName>
        <fullName evidence="1">tRNA uridine 5-carboxymethylaminomethyl modification enzyme MnmG</fullName>
    </recommendedName>
    <alternativeName>
        <fullName evidence="1">Glucose-inhibited division protein A</fullName>
    </alternativeName>
</protein>
<sequence>MFYQDPFDVIIIGGGHAGTEAAMAAARMGQQTLLLTHNIDTLGQMSCNPAIGGIGKGHLVKEVDALGGLMAKAIDQAGIQFRILNASKGPAVRATRAQADRVLYRQAVRTALENQPNLMIFQQAVEDLIVENDRVVGAVTQMGLKFRAKAVVLTVGTFLDGKIHIGLDNYSGGRAGDPPSIPLSRRLRELPLRVSRLKTGTPPRIDARTIDFSVLAQQHGDNPMPVFSFMGNASQHPQQVPCYITHTNEKTHDVIRNNLDRSPMYAGVIEGIGPRYCPSIEDKVMRFADRNQHQIFLEPEGLTSNEIYPNGISTSLPFDVQMQIVRSMQGMENAKIVRPGYAIEYDFFDPRDLKPTLESKFIHGLFFAGQINGTTGYEEAAAQGLLAGLNAARLSADKERWAPARSQAYLGVLVDDLCTLGTKEPYRMFTSRAEYRLMLREDNADLRLTEMGRELGLVDDERWARFNEKLENIERERQRLKSTWVTPSAESADEVNAHLTTPLSREASGEDLLRRPEMTYAQLTSLAAFAPALEDEQAAEQVEIQVKYEGYIARQQDEIEKQLRNENTLLPATLDYRQVSGLSNEVIAKLNDHKPASIGQASRISGVTPAAISILLVWLKKQGMLRRSA</sequence>
<feature type="chain" id="PRO_0000117169" description="tRNA uridine 5-carboxymethylaminomethyl modification enzyme MnmG">
    <location>
        <begin position="1"/>
        <end position="629"/>
    </location>
</feature>
<feature type="binding site" evidence="1">
    <location>
        <begin position="13"/>
        <end position="18"/>
    </location>
    <ligand>
        <name>FAD</name>
        <dbReference type="ChEBI" id="CHEBI:57692"/>
    </ligand>
</feature>
<feature type="binding site" evidence="1">
    <location>
        <position position="125"/>
    </location>
    <ligand>
        <name>FAD</name>
        <dbReference type="ChEBI" id="CHEBI:57692"/>
    </ligand>
</feature>
<feature type="binding site" evidence="1">
    <location>
        <position position="180"/>
    </location>
    <ligand>
        <name>FAD</name>
        <dbReference type="ChEBI" id="CHEBI:57692"/>
    </ligand>
</feature>
<feature type="binding site" evidence="1">
    <location>
        <begin position="273"/>
        <end position="287"/>
    </location>
    <ligand>
        <name>NAD(+)</name>
        <dbReference type="ChEBI" id="CHEBI:57540"/>
    </ligand>
</feature>
<feature type="binding site" evidence="1">
    <location>
        <position position="370"/>
    </location>
    <ligand>
        <name>FAD</name>
        <dbReference type="ChEBI" id="CHEBI:57692"/>
    </ligand>
</feature>
<name>MNMG_SALPA</name>
<accession>Q5PJX1</accession>
<evidence type="ECO:0000255" key="1">
    <source>
        <dbReference type="HAMAP-Rule" id="MF_00129"/>
    </source>
</evidence>
<organism>
    <name type="scientific">Salmonella paratyphi A (strain ATCC 9150 / SARB42)</name>
    <dbReference type="NCBI Taxonomy" id="295319"/>
    <lineage>
        <taxon>Bacteria</taxon>
        <taxon>Pseudomonadati</taxon>
        <taxon>Pseudomonadota</taxon>
        <taxon>Gammaproteobacteria</taxon>
        <taxon>Enterobacterales</taxon>
        <taxon>Enterobacteriaceae</taxon>
        <taxon>Salmonella</taxon>
    </lineage>
</organism>
<reference key="1">
    <citation type="journal article" date="2004" name="Nat. Genet.">
        <title>Comparison of genome degradation in Paratyphi A and Typhi, human-restricted serovars of Salmonella enterica that cause typhoid.</title>
        <authorList>
            <person name="McClelland M."/>
            <person name="Sanderson K.E."/>
            <person name="Clifton S.W."/>
            <person name="Latreille P."/>
            <person name="Porwollik S."/>
            <person name="Sabo A."/>
            <person name="Meyer R."/>
            <person name="Bieri T."/>
            <person name="Ozersky P."/>
            <person name="McLellan M."/>
            <person name="Harkins C.R."/>
            <person name="Wang C."/>
            <person name="Nguyen C."/>
            <person name="Berghoff A."/>
            <person name="Elliott G."/>
            <person name="Kohlberg S."/>
            <person name="Strong C."/>
            <person name="Du F."/>
            <person name="Carter J."/>
            <person name="Kremizki C."/>
            <person name="Layman D."/>
            <person name="Leonard S."/>
            <person name="Sun H."/>
            <person name="Fulton L."/>
            <person name="Nash W."/>
            <person name="Miner T."/>
            <person name="Minx P."/>
            <person name="Delehaunty K."/>
            <person name="Fronick C."/>
            <person name="Magrini V."/>
            <person name="Nhan M."/>
            <person name="Warren W."/>
            <person name="Florea L."/>
            <person name="Spieth J."/>
            <person name="Wilson R.K."/>
        </authorList>
    </citation>
    <scope>NUCLEOTIDE SEQUENCE [LARGE SCALE GENOMIC DNA]</scope>
    <source>
        <strain>ATCC 9150 / SARB42</strain>
    </source>
</reference>
<dbReference type="EMBL" id="CP000026">
    <property type="protein sequence ID" value="AAV79505.1"/>
    <property type="molecule type" value="Genomic_DNA"/>
</dbReference>
<dbReference type="RefSeq" id="WP_000499877.1">
    <property type="nucleotide sequence ID" value="NC_006511.1"/>
</dbReference>
<dbReference type="SMR" id="Q5PJX1"/>
<dbReference type="KEGG" id="spt:SPA3713"/>
<dbReference type="HOGENOM" id="CLU_007831_2_2_6"/>
<dbReference type="Proteomes" id="UP000008185">
    <property type="component" value="Chromosome"/>
</dbReference>
<dbReference type="GO" id="GO:0005829">
    <property type="term" value="C:cytosol"/>
    <property type="evidence" value="ECO:0007669"/>
    <property type="project" value="TreeGrafter"/>
</dbReference>
<dbReference type="GO" id="GO:0050660">
    <property type="term" value="F:flavin adenine dinucleotide binding"/>
    <property type="evidence" value="ECO:0007669"/>
    <property type="project" value="UniProtKB-UniRule"/>
</dbReference>
<dbReference type="GO" id="GO:0030488">
    <property type="term" value="P:tRNA methylation"/>
    <property type="evidence" value="ECO:0007669"/>
    <property type="project" value="TreeGrafter"/>
</dbReference>
<dbReference type="GO" id="GO:0002098">
    <property type="term" value="P:tRNA wobble uridine modification"/>
    <property type="evidence" value="ECO:0007669"/>
    <property type="project" value="InterPro"/>
</dbReference>
<dbReference type="FunFam" id="1.10.10.1800:FF:000001">
    <property type="entry name" value="tRNA uridine 5-carboxymethylaminomethyl modification enzyme MnmG"/>
    <property type="match status" value="1"/>
</dbReference>
<dbReference type="FunFam" id="1.10.150.570:FF:000001">
    <property type="entry name" value="tRNA uridine 5-carboxymethylaminomethyl modification enzyme MnmG"/>
    <property type="match status" value="1"/>
</dbReference>
<dbReference type="FunFam" id="3.50.50.60:FF:000002">
    <property type="entry name" value="tRNA uridine 5-carboxymethylaminomethyl modification enzyme MnmG"/>
    <property type="match status" value="1"/>
</dbReference>
<dbReference type="FunFam" id="3.50.50.60:FF:000010">
    <property type="entry name" value="tRNA uridine 5-carboxymethylaminomethyl modification enzyme MnmG"/>
    <property type="match status" value="1"/>
</dbReference>
<dbReference type="Gene3D" id="3.50.50.60">
    <property type="entry name" value="FAD/NAD(P)-binding domain"/>
    <property type="match status" value="2"/>
</dbReference>
<dbReference type="Gene3D" id="1.10.150.570">
    <property type="entry name" value="GidA associated domain, C-terminal subdomain"/>
    <property type="match status" value="1"/>
</dbReference>
<dbReference type="Gene3D" id="1.10.10.1800">
    <property type="entry name" value="tRNA uridine 5-carboxymethylaminomethyl modification enzyme MnmG/GidA"/>
    <property type="match status" value="1"/>
</dbReference>
<dbReference type="HAMAP" id="MF_00129">
    <property type="entry name" value="MnmG_GidA"/>
    <property type="match status" value="1"/>
</dbReference>
<dbReference type="InterPro" id="IPR036188">
    <property type="entry name" value="FAD/NAD-bd_sf"/>
</dbReference>
<dbReference type="InterPro" id="IPR049312">
    <property type="entry name" value="GIDA_C_N"/>
</dbReference>
<dbReference type="InterPro" id="IPR004416">
    <property type="entry name" value="MnmG"/>
</dbReference>
<dbReference type="InterPro" id="IPR002218">
    <property type="entry name" value="MnmG-rel"/>
</dbReference>
<dbReference type="InterPro" id="IPR020595">
    <property type="entry name" value="MnmG-rel_CS"/>
</dbReference>
<dbReference type="InterPro" id="IPR026904">
    <property type="entry name" value="MnmG_C"/>
</dbReference>
<dbReference type="InterPro" id="IPR047001">
    <property type="entry name" value="MnmG_C_subdom"/>
</dbReference>
<dbReference type="InterPro" id="IPR044920">
    <property type="entry name" value="MnmG_C_subdom_sf"/>
</dbReference>
<dbReference type="InterPro" id="IPR040131">
    <property type="entry name" value="MnmG_N"/>
</dbReference>
<dbReference type="NCBIfam" id="TIGR00136">
    <property type="entry name" value="mnmG_gidA"/>
    <property type="match status" value="1"/>
</dbReference>
<dbReference type="PANTHER" id="PTHR11806">
    <property type="entry name" value="GLUCOSE INHIBITED DIVISION PROTEIN A"/>
    <property type="match status" value="1"/>
</dbReference>
<dbReference type="PANTHER" id="PTHR11806:SF0">
    <property type="entry name" value="PROTEIN MTO1 HOMOLOG, MITOCHONDRIAL"/>
    <property type="match status" value="1"/>
</dbReference>
<dbReference type="Pfam" id="PF01134">
    <property type="entry name" value="GIDA"/>
    <property type="match status" value="1"/>
</dbReference>
<dbReference type="Pfam" id="PF21680">
    <property type="entry name" value="GIDA_C_1st"/>
    <property type="match status" value="1"/>
</dbReference>
<dbReference type="Pfam" id="PF13932">
    <property type="entry name" value="SAM_GIDA_C"/>
    <property type="match status" value="1"/>
</dbReference>
<dbReference type="SMART" id="SM01228">
    <property type="entry name" value="GIDA_assoc_3"/>
    <property type="match status" value="1"/>
</dbReference>
<dbReference type="SUPFAM" id="SSF51905">
    <property type="entry name" value="FAD/NAD(P)-binding domain"/>
    <property type="match status" value="1"/>
</dbReference>
<dbReference type="PROSITE" id="PS01280">
    <property type="entry name" value="GIDA_1"/>
    <property type="match status" value="1"/>
</dbReference>
<dbReference type="PROSITE" id="PS01281">
    <property type="entry name" value="GIDA_2"/>
    <property type="match status" value="1"/>
</dbReference>
<proteinExistence type="inferred from homology"/>
<gene>
    <name evidence="1" type="primary">mnmG</name>
    <name evidence="1" type="synonym">gidA</name>
    <name type="ordered locus">SPA3713</name>
</gene>
<keyword id="KW-0963">Cytoplasm</keyword>
<keyword id="KW-0274">FAD</keyword>
<keyword id="KW-0285">Flavoprotein</keyword>
<keyword id="KW-0520">NAD</keyword>
<keyword id="KW-0819">tRNA processing</keyword>